<reference key="1">
    <citation type="journal article" date="1990" name="Curr. Top. Microbiol. Immunol.">
        <title>Analysis of the protein-coding content of the sequence of human cytomegalovirus strain AD169.</title>
        <authorList>
            <person name="Chee M.S."/>
            <person name="Bankier A.T."/>
            <person name="Beck S."/>
            <person name="Bohni R."/>
            <person name="Brown C.M."/>
            <person name="Cerny R."/>
            <person name="Horsnell T."/>
            <person name="Hutchison C.A. III"/>
            <person name="Kouzarides T."/>
            <person name="Martignetti J.A."/>
            <person name="Preddie E."/>
            <person name="Satchwell S.C."/>
            <person name="Tomlinson P."/>
            <person name="Weston K.M."/>
            <person name="Barrell B.G."/>
        </authorList>
    </citation>
    <scope>NUCLEOTIDE SEQUENCE [LARGE SCALE GENOMIC DNA]</scope>
</reference>
<name>IR02_HCMVA</name>
<dbReference type="EMBL" id="X17403">
    <property type="protein sequence ID" value="CAA35450.1"/>
    <property type="molecule type" value="Genomic_DNA"/>
</dbReference>
<dbReference type="EMBL" id="X17403">
    <property type="protein sequence ID" value="CAA35308.1"/>
    <property type="molecule type" value="Genomic_DNA"/>
</dbReference>
<dbReference type="PIR" id="S09751">
    <property type="entry name" value="S09751"/>
</dbReference>
<dbReference type="Proteomes" id="UP000008991">
    <property type="component" value="Segment"/>
</dbReference>
<accession>P16802</accession>
<organism>
    <name type="scientific">Human cytomegalovirus (strain AD169)</name>
    <name type="common">HHV-5</name>
    <name type="synonym">Human herpesvirus 5</name>
    <dbReference type="NCBI Taxonomy" id="10360"/>
    <lineage>
        <taxon>Viruses</taxon>
        <taxon>Duplodnaviria</taxon>
        <taxon>Heunggongvirae</taxon>
        <taxon>Peploviricota</taxon>
        <taxon>Herviviricetes</taxon>
        <taxon>Herpesvirales</taxon>
        <taxon>Orthoherpesviridae</taxon>
        <taxon>Betaherpesvirinae</taxon>
        <taxon>Cytomegalovirus</taxon>
        <taxon>Cytomegalovirus humanbeta5</taxon>
        <taxon>Human cytomegalovirus</taxon>
    </lineage>
</organism>
<feature type="chain" id="PRO_0000115250" description="Uncharacterized protein IRL2">
    <location>
        <begin position="1"/>
        <end position="115"/>
    </location>
</feature>
<proteinExistence type="predicted"/>
<organismHost>
    <name type="scientific">Homo sapiens</name>
    <name type="common">Human</name>
    <dbReference type="NCBI Taxonomy" id="9606"/>
</organismHost>
<protein>
    <recommendedName>
        <fullName>Uncharacterized protein IRL2</fullName>
        <shortName>TRL2</shortName>
    </recommendedName>
</protein>
<sequence>TSLVDGVGGSTSPGIASFAATLLHRYPINPSPRHDVSAYLCSLKNPSPRPPIPSTPHAITNHGHDKCMQTSHLLCLLLCVATGSEEGEGKEKKKEQNNRLAEGIIRATELVLLFL</sequence>